<feature type="chain" id="PRO_1000190385" description="Phosphoribosyl-ATP pyrophosphatase">
    <location>
        <begin position="1"/>
        <end position="111"/>
    </location>
</feature>
<name>HIS2_PSEA8</name>
<proteinExistence type="inferred from homology"/>
<accession>B7V3G0</accession>
<protein>
    <recommendedName>
        <fullName evidence="1">Phosphoribosyl-ATP pyrophosphatase</fullName>
        <shortName evidence="1">PRA-PH</shortName>
        <ecNumber evidence="1">3.6.1.31</ecNumber>
    </recommendedName>
</protein>
<sequence>MSDTLTRLAAVLEERKNAAPDSSYVASLYHKGLNKILEKVGEESVETIIAAKDAAASGDCQDLIYETADLWFHSLVMLSALGQHPQAVLDELERRFGLSGHAEKAARQPSA</sequence>
<organism>
    <name type="scientific">Pseudomonas aeruginosa (strain LESB58)</name>
    <dbReference type="NCBI Taxonomy" id="557722"/>
    <lineage>
        <taxon>Bacteria</taxon>
        <taxon>Pseudomonadati</taxon>
        <taxon>Pseudomonadota</taxon>
        <taxon>Gammaproteobacteria</taxon>
        <taxon>Pseudomonadales</taxon>
        <taxon>Pseudomonadaceae</taxon>
        <taxon>Pseudomonas</taxon>
    </lineage>
</organism>
<evidence type="ECO:0000255" key="1">
    <source>
        <dbReference type="HAMAP-Rule" id="MF_01020"/>
    </source>
</evidence>
<gene>
    <name evidence="1" type="primary">hisE</name>
    <name type="ordered locus">PLES_54571</name>
</gene>
<dbReference type="EC" id="3.6.1.31" evidence="1"/>
<dbReference type="EMBL" id="FM209186">
    <property type="protein sequence ID" value="CAW30211.1"/>
    <property type="molecule type" value="Genomic_DNA"/>
</dbReference>
<dbReference type="RefSeq" id="WP_003103458.1">
    <property type="nucleotide sequence ID" value="NC_011770.1"/>
</dbReference>
<dbReference type="SMR" id="B7V3G0"/>
<dbReference type="KEGG" id="pag:PLES_54571"/>
<dbReference type="HOGENOM" id="CLU_123337_1_2_6"/>
<dbReference type="UniPathway" id="UPA00031">
    <property type="reaction ID" value="UER00007"/>
</dbReference>
<dbReference type="GO" id="GO:0005737">
    <property type="term" value="C:cytoplasm"/>
    <property type="evidence" value="ECO:0007669"/>
    <property type="project" value="UniProtKB-SubCell"/>
</dbReference>
<dbReference type="GO" id="GO:0005524">
    <property type="term" value="F:ATP binding"/>
    <property type="evidence" value="ECO:0007669"/>
    <property type="project" value="UniProtKB-KW"/>
</dbReference>
<dbReference type="GO" id="GO:0004636">
    <property type="term" value="F:phosphoribosyl-ATP diphosphatase activity"/>
    <property type="evidence" value="ECO:0007669"/>
    <property type="project" value="UniProtKB-UniRule"/>
</dbReference>
<dbReference type="GO" id="GO:0000105">
    <property type="term" value="P:L-histidine biosynthetic process"/>
    <property type="evidence" value="ECO:0007669"/>
    <property type="project" value="UniProtKB-UniRule"/>
</dbReference>
<dbReference type="CDD" id="cd11534">
    <property type="entry name" value="NTP-PPase_HisIE_like"/>
    <property type="match status" value="1"/>
</dbReference>
<dbReference type="Gene3D" id="1.10.287.1080">
    <property type="entry name" value="MazG-like"/>
    <property type="match status" value="1"/>
</dbReference>
<dbReference type="HAMAP" id="MF_01020">
    <property type="entry name" value="HisE"/>
    <property type="match status" value="1"/>
</dbReference>
<dbReference type="InterPro" id="IPR008179">
    <property type="entry name" value="HisE"/>
</dbReference>
<dbReference type="InterPro" id="IPR021130">
    <property type="entry name" value="PRib-ATP_PPHydrolase-like"/>
</dbReference>
<dbReference type="NCBIfam" id="TIGR03188">
    <property type="entry name" value="histidine_hisI"/>
    <property type="match status" value="1"/>
</dbReference>
<dbReference type="NCBIfam" id="NF001611">
    <property type="entry name" value="PRK00400.1-3"/>
    <property type="match status" value="1"/>
</dbReference>
<dbReference type="PANTHER" id="PTHR42945">
    <property type="entry name" value="HISTIDINE BIOSYNTHESIS BIFUNCTIONAL PROTEIN"/>
    <property type="match status" value="1"/>
</dbReference>
<dbReference type="PANTHER" id="PTHR42945:SF9">
    <property type="entry name" value="HISTIDINE BIOSYNTHESIS BIFUNCTIONAL PROTEIN HISIE"/>
    <property type="match status" value="1"/>
</dbReference>
<dbReference type="Pfam" id="PF01503">
    <property type="entry name" value="PRA-PH"/>
    <property type="match status" value="1"/>
</dbReference>
<dbReference type="SUPFAM" id="SSF101386">
    <property type="entry name" value="all-alpha NTP pyrophosphatases"/>
    <property type="match status" value="1"/>
</dbReference>
<comment type="catalytic activity">
    <reaction evidence="1">
        <text>1-(5-phospho-beta-D-ribosyl)-ATP + H2O = 1-(5-phospho-beta-D-ribosyl)-5'-AMP + diphosphate + H(+)</text>
        <dbReference type="Rhea" id="RHEA:22828"/>
        <dbReference type="ChEBI" id="CHEBI:15377"/>
        <dbReference type="ChEBI" id="CHEBI:15378"/>
        <dbReference type="ChEBI" id="CHEBI:33019"/>
        <dbReference type="ChEBI" id="CHEBI:59457"/>
        <dbReference type="ChEBI" id="CHEBI:73183"/>
        <dbReference type="EC" id="3.6.1.31"/>
    </reaction>
</comment>
<comment type="pathway">
    <text evidence="1">Amino-acid biosynthesis; L-histidine biosynthesis; L-histidine from 5-phospho-alpha-D-ribose 1-diphosphate: step 2/9.</text>
</comment>
<comment type="subcellular location">
    <subcellularLocation>
        <location evidence="1">Cytoplasm</location>
    </subcellularLocation>
</comment>
<comment type="similarity">
    <text evidence="1">Belongs to the PRA-PH family.</text>
</comment>
<keyword id="KW-0028">Amino-acid biosynthesis</keyword>
<keyword id="KW-0067">ATP-binding</keyword>
<keyword id="KW-0963">Cytoplasm</keyword>
<keyword id="KW-0368">Histidine biosynthesis</keyword>
<keyword id="KW-0378">Hydrolase</keyword>
<keyword id="KW-0547">Nucleotide-binding</keyword>
<reference key="1">
    <citation type="journal article" date="2009" name="Genome Res.">
        <title>Newly introduced genomic prophage islands are critical determinants of in vivo competitiveness in the Liverpool epidemic strain of Pseudomonas aeruginosa.</title>
        <authorList>
            <person name="Winstanley C."/>
            <person name="Langille M.G.I."/>
            <person name="Fothergill J.L."/>
            <person name="Kukavica-Ibrulj I."/>
            <person name="Paradis-Bleau C."/>
            <person name="Sanschagrin F."/>
            <person name="Thomson N.R."/>
            <person name="Winsor G.L."/>
            <person name="Quail M.A."/>
            <person name="Lennard N."/>
            <person name="Bignell A."/>
            <person name="Clarke L."/>
            <person name="Seeger K."/>
            <person name="Saunders D."/>
            <person name="Harris D."/>
            <person name="Parkhill J."/>
            <person name="Hancock R.E.W."/>
            <person name="Brinkman F.S.L."/>
            <person name="Levesque R.C."/>
        </authorList>
    </citation>
    <scope>NUCLEOTIDE SEQUENCE [LARGE SCALE GENOMIC DNA]</scope>
    <source>
        <strain>LESB58</strain>
    </source>
</reference>